<comment type="function">
    <text evidence="1">Catalyzes the conversion of 3-deoxy-D-arabino-heptulosonate 7-phosphate (DAHP) to dehydroquinate (DHQ).</text>
</comment>
<comment type="catalytic activity">
    <reaction evidence="1">
        <text>7-phospho-2-dehydro-3-deoxy-D-arabino-heptonate = 3-dehydroquinate + phosphate</text>
        <dbReference type="Rhea" id="RHEA:21968"/>
        <dbReference type="ChEBI" id="CHEBI:32364"/>
        <dbReference type="ChEBI" id="CHEBI:43474"/>
        <dbReference type="ChEBI" id="CHEBI:58394"/>
        <dbReference type="EC" id="4.2.3.4"/>
    </reaction>
</comment>
<comment type="cofactor">
    <cofactor evidence="1">
        <name>Co(2+)</name>
        <dbReference type="ChEBI" id="CHEBI:48828"/>
    </cofactor>
    <cofactor evidence="1">
        <name>Zn(2+)</name>
        <dbReference type="ChEBI" id="CHEBI:29105"/>
    </cofactor>
    <text evidence="1">Binds 1 divalent metal cation per subunit. Can use either Co(2+) or Zn(2+).</text>
</comment>
<comment type="cofactor">
    <cofactor evidence="1">
        <name>NAD(+)</name>
        <dbReference type="ChEBI" id="CHEBI:57540"/>
    </cofactor>
</comment>
<comment type="pathway">
    <text evidence="1">Metabolic intermediate biosynthesis; chorismate biosynthesis; chorismate from D-erythrose 4-phosphate and phosphoenolpyruvate: step 2/7.</text>
</comment>
<comment type="subcellular location">
    <subcellularLocation>
        <location evidence="1">Cytoplasm</location>
    </subcellularLocation>
</comment>
<comment type="similarity">
    <text evidence="1">Belongs to the sugar phosphate cyclases superfamily. Dehydroquinate synthase family.</text>
</comment>
<name>AROB_STRT1</name>
<feature type="chain" id="PRO_0000231135" description="3-dehydroquinate synthase">
    <location>
        <begin position="1"/>
        <end position="355"/>
    </location>
</feature>
<feature type="binding site" evidence="1">
    <location>
        <begin position="71"/>
        <end position="76"/>
    </location>
    <ligand>
        <name>NAD(+)</name>
        <dbReference type="ChEBI" id="CHEBI:57540"/>
    </ligand>
</feature>
<feature type="binding site" evidence="1">
    <location>
        <begin position="105"/>
        <end position="109"/>
    </location>
    <ligand>
        <name>NAD(+)</name>
        <dbReference type="ChEBI" id="CHEBI:57540"/>
    </ligand>
</feature>
<feature type="binding site" evidence="1">
    <location>
        <begin position="129"/>
        <end position="130"/>
    </location>
    <ligand>
        <name>NAD(+)</name>
        <dbReference type="ChEBI" id="CHEBI:57540"/>
    </ligand>
</feature>
<feature type="binding site" evidence="1">
    <location>
        <position position="142"/>
    </location>
    <ligand>
        <name>NAD(+)</name>
        <dbReference type="ChEBI" id="CHEBI:57540"/>
    </ligand>
</feature>
<feature type="binding site" evidence="1">
    <location>
        <position position="151"/>
    </location>
    <ligand>
        <name>NAD(+)</name>
        <dbReference type="ChEBI" id="CHEBI:57540"/>
    </ligand>
</feature>
<feature type="binding site" evidence="1">
    <location>
        <position position="184"/>
    </location>
    <ligand>
        <name>Zn(2+)</name>
        <dbReference type="ChEBI" id="CHEBI:29105"/>
    </ligand>
</feature>
<feature type="binding site" evidence="1">
    <location>
        <position position="246"/>
    </location>
    <ligand>
        <name>Zn(2+)</name>
        <dbReference type="ChEBI" id="CHEBI:29105"/>
    </ligand>
</feature>
<feature type="binding site" evidence="1">
    <location>
        <position position="263"/>
    </location>
    <ligand>
        <name>Zn(2+)</name>
        <dbReference type="ChEBI" id="CHEBI:29105"/>
    </ligand>
</feature>
<gene>
    <name evidence="1" type="primary">aroB</name>
    <name type="ordered locus">str0640</name>
</gene>
<organism>
    <name type="scientific">Streptococcus thermophilus (strain CNRZ 1066)</name>
    <dbReference type="NCBI Taxonomy" id="299768"/>
    <lineage>
        <taxon>Bacteria</taxon>
        <taxon>Bacillati</taxon>
        <taxon>Bacillota</taxon>
        <taxon>Bacilli</taxon>
        <taxon>Lactobacillales</taxon>
        <taxon>Streptococcaceae</taxon>
        <taxon>Streptococcus</taxon>
    </lineage>
</organism>
<proteinExistence type="inferred from homology"/>
<keyword id="KW-0028">Amino-acid biosynthesis</keyword>
<keyword id="KW-0057">Aromatic amino acid biosynthesis</keyword>
<keyword id="KW-0170">Cobalt</keyword>
<keyword id="KW-0963">Cytoplasm</keyword>
<keyword id="KW-0456">Lyase</keyword>
<keyword id="KW-0479">Metal-binding</keyword>
<keyword id="KW-0520">NAD</keyword>
<keyword id="KW-0547">Nucleotide-binding</keyword>
<keyword id="KW-0862">Zinc</keyword>
<reference key="1">
    <citation type="journal article" date="2004" name="Nat. Biotechnol.">
        <title>Complete sequence and comparative genome analysis of the dairy bacterium Streptococcus thermophilus.</title>
        <authorList>
            <person name="Bolotin A."/>
            <person name="Quinquis B."/>
            <person name="Renault P."/>
            <person name="Sorokin A."/>
            <person name="Ehrlich S.D."/>
            <person name="Kulakauskas S."/>
            <person name="Lapidus A."/>
            <person name="Goltsman E."/>
            <person name="Mazur M."/>
            <person name="Pusch G.D."/>
            <person name="Fonstein M."/>
            <person name="Overbeek R."/>
            <person name="Kyprides N."/>
            <person name="Purnelle B."/>
            <person name="Prozzi D."/>
            <person name="Ngui K."/>
            <person name="Masuy D."/>
            <person name="Hancy F."/>
            <person name="Burteau S."/>
            <person name="Boutry M."/>
            <person name="Delcour J."/>
            <person name="Goffeau A."/>
            <person name="Hols P."/>
        </authorList>
    </citation>
    <scope>NUCLEOTIDE SEQUENCE [LARGE SCALE GENOMIC DNA]</scope>
    <source>
        <strain>CNRZ 1066</strain>
    </source>
</reference>
<evidence type="ECO:0000255" key="1">
    <source>
        <dbReference type="HAMAP-Rule" id="MF_00110"/>
    </source>
</evidence>
<sequence length="355" mass="39175">MKLEVNLKQNPYDIIIEKGALKGVGQWVKSLWEPQKIALITDNHVRGLYAEKVKLSLENEGFEVVVFDFLEGEASKNLKTVNKAYEFLIKNGMTRSDGIVALGGGVVGDLAGFVASTYMRGIHFVQVPTSLTAQVDSSIGGKTGVNTPFAKNIVGTFAQPDGVLIDPNVLKTLGKRELIEGMGEVVKYGLIDDPELWQLLDNIDGSVHSILENSETIIYRSCNVKRKIVVEDEFEGGVRMYLNFGHTIGHAVEQTAGYGKVMHGEAVAIGMVQISRVAEKKKLMPQGITRQIAEMCVKFGLPVDYEPWRVEELYTALTHDKKARGNSIKTVIVPEIGKAAINQIPLIEMKEYLEK</sequence>
<accession>Q5M0M0</accession>
<dbReference type="EC" id="4.2.3.4" evidence="1"/>
<dbReference type="EMBL" id="CP000024">
    <property type="protein sequence ID" value="AAV62236.1"/>
    <property type="molecule type" value="Genomic_DNA"/>
</dbReference>
<dbReference type="RefSeq" id="WP_011225711.1">
    <property type="nucleotide sequence ID" value="NC_006449.1"/>
</dbReference>
<dbReference type="SMR" id="Q5M0M0"/>
<dbReference type="GeneID" id="66898548"/>
<dbReference type="KEGG" id="stc:str0640"/>
<dbReference type="HOGENOM" id="CLU_001201_0_1_9"/>
<dbReference type="UniPathway" id="UPA00053">
    <property type="reaction ID" value="UER00085"/>
</dbReference>
<dbReference type="GO" id="GO:0005737">
    <property type="term" value="C:cytoplasm"/>
    <property type="evidence" value="ECO:0007669"/>
    <property type="project" value="UniProtKB-SubCell"/>
</dbReference>
<dbReference type="GO" id="GO:0003856">
    <property type="term" value="F:3-dehydroquinate synthase activity"/>
    <property type="evidence" value="ECO:0007669"/>
    <property type="project" value="UniProtKB-UniRule"/>
</dbReference>
<dbReference type="GO" id="GO:0046872">
    <property type="term" value="F:metal ion binding"/>
    <property type="evidence" value="ECO:0007669"/>
    <property type="project" value="UniProtKB-KW"/>
</dbReference>
<dbReference type="GO" id="GO:0000166">
    <property type="term" value="F:nucleotide binding"/>
    <property type="evidence" value="ECO:0007669"/>
    <property type="project" value="UniProtKB-KW"/>
</dbReference>
<dbReference type="GO" id="GO:0008652">
    <property type="term" value="P:amino acid biosynthetic process"/>
    <property type="evidence" value="ECO:0007669"/>
    <property type="project" value="UniProtKB-KW"/>
</dbReference>
<dbReference type="GO" id="GO:0009073">
    <property type="term" value="P:aromatic amino acid family biosynthetic process"/>
    <property type="evidence" value="ECO:0007669"/>
    <property type="project" value="UniProtKB-KW"/>
</dbReference>
<dbReference type="GO" id="GO:0009423">
    <property type="term" value="P:chorismate biosynthetic process"/>
    <property type="evidence" value="ECO:0007669"/>
    <property type="project" value="UniProtKB-UniRule"/>
</dbReference>
<dbReference type="CDD" id="cd08195">
    <property type="entry name" value="DHQS"/>
    <property type="match status" value="1"/>
</dbReference>
<dbReference type="FunFam" id="3.40.50.1970:FF:000001">
    <property type="entry name" value="3-dehydroquinate synthase"/>
    <property type="match status" value="1"/>
</dbReference>
<dbReference type="Gene3D" id="3.40.50.1970">
    <property type="match status" value="1"/>
</dbReference>
<dbReference type="Gene3D" id="1.20.1090.10">
    <property type="entry name" value="Dehydroquinate synthase-like - alpha domain"/>
    <property type="match status" value="1"/>
</dbReference>
<dbReference type="HAMAP" id="MF_00110">
    <property type="entry name" value="DHQ_synthase"/>
    <property type="match status" value="1"/>
</dbReference>
<dbReference type="InterPro" id="IPR050071">
    <property type="entry name" value="Dehydroquinate_synthase"/>
</dbReference>
<dbReference type="InterPro" id="IPR016037">
    <property type="entry name" value="DHQ_synth_AroB"/>
</dbReference>
<dbReference type="InterPro" id="IPR030963">
    <property type="entry name" value="DHQ_synth_fam"/>
</dbReference>
<dbReference type="InterPro" id="IPR030960">
    <property type="entry name" value="DHQS/DOIS_N"/>
</dbReference>
<dbReference type="InterPro" id="IPR056179">
    <property type="entry name" value="DHQS_C"/>
</dbReference>
<dbReference type="NCBIfam" id="TIGR01357">
    <property type="entry name" value="aroB"/>
    <property type="match status" value="1"/>
</dbReference>
<dbReference type="PANTHER" id="PTHR43622">
    <property type="entry name" value="3-DEHYDROQUINATE SYNTHASE"/>
    <property type="match status" value="1"/>
</dbReference>
<dbReference type="PANTHER" id="PTHR43622:SF7">
    <property type="entry name" value="3-DEHYDROQUINATE SYNTHASE, CHLOROPLASTIC"/>
    <property type="match status" value="1"/>
</dbReference>
<dbReference type="Pfam" id="PF01761">
    <property type="entry name" value="DHQ_synthase"/>
    <property type="match status" value="1"/>
</dbReference>
<dbReference type="Pfam" id="PF24621">
    <property type="entry name" value="DHQS_C"/>
    <property type="match status" value="1"/>
</dbReference>
<dbReference type="PIRSF" id="PIRSF001455">
    <property type="entry name" value="DHQ_synth"/>
    <property type="match status" value="1"/>
</dbReference>
<dbReference type="SUPFAM" id="SSF56796">
    <property type="entry name" value="Dehydroquinate synthase-like"/>
    <property type="match status" value="1"/>
</dbReference>
<protein>
    <recommendedName>
        <fullName evidence="1">3-dehydroquinate synthase</fullName>
        <shortName evidence="1">DHQS</shortName>
        <ecNumber evidence="1">4.2.3.4</ecNumber>
    </recommendedName>
</protein>